<accession>Q6D841</accession>
<feature type="chain" id="PRO_1000074224" description="tRNA sulfurtransferase">
    <location>
        <begin position="1"/>
        <end position="482"/>
    </location>
</feature>
<feature type="domain" description="THUMP" evidence="1">
    <location>
        <begin position="61"/>
        <end position="165"/>
    </location>
</feature>
<feature type="domain" description="Rhodanese" evidence="1">
    <location>
        <begin position="404"/>
        <end position="482"/>
    </location>
</feature>
<feature type="active site" description="Cysteine persulfide intermediate" evidence="1">
    <location>
        <position position="456"/>
    </location>
</feature>
<feature type="binding site" evidence="1">
    <location>
        <begin position="183"/>
        <end position="184"/>
    </location>
    <ligand>
        <name>ATP</name>
        <dbReference type="ChEBI" id="CHEBI:30616"/>
    </ligand>
</feature>
<feature type="binding site" evidence="1">
    <location>
        <position position="265"/>
    </location>
    <ligand>
        <name>ATP</name>
        <dbReference type="ChEBI" id="CHEBI:30616"/>
    </ligand>
</feature>
<feature type="binding site" evidence="1">
    <location>
        <position position="287"/>
    </location>
    <ligand>
        <name>ATP</name>
        <dbReference type="ChEBI" id="CHEBI:30616"/>
    </ligand>
</feature>
<feature type="binding site" evidence="1">
    <location>
        <position position="296"/>
    </location>
    <ligand>
        <name>ATP</name>
        <dbReference type="ChEBI" id="CHEBI:30616"/>
    </ligand>
</feature>
<feature type="disulfide bond" description="Redox-active" evidence="1">
    <location>
        <begin position="344"/>
        <end position="456"/>
    </location>
</feature>
<name>THII_PECAS</name>
<dbReference type="EC" id="2.8.1.4" evidence="1"/>
<dbReference type="EMBL" id="BX950851">
    <property type="protein sequence ID" value="CAG74044.1"/>
    <property type="molecule type" value="Genomic_DNA"/>
</dbReference>
<dbReference type="RefSeq" id="WP_011092728.1">
    <property type="nucleotide sequence ID" value="NC_004547.2"/>
</dbReference>
<dbReference type="SMR" id="Q6D841"/>
<dbReference type="STRING" id="218491.ECA1134"/>
<dbReference type="GeneID" id="57207948"/>
<dbReference type="KEGG" id="eca:ECA1134"/>
<dbReference type="PATRIC" id="fig|218491.5.peg.1147"/>
<dbReference type="eggNOG" id="COG0301">
    <property type="taxonomic scope" value="Bacteria"/>
</dbReference>
<dbReference type="eggNOG" id="COG0607">
    <property type="taxonomic scope" value="Bacteria"/>
</dbReference>
<dbReference type="HOGENOM" id="CLU_037952_4_1_6"/>
<dbReference type="OrthoDB" id="9773948at2"/>
<dbReference type="UniPathway" id="UPA00060"/>
<dbReference type="Proteomes" id="UP000007966">
    <property type="component" value="Chromosome"/>
</dbReference>
<dbReference type="GO" id="GO:0005829">
    <property type="term" value="C:cytosol"/>
    <property type="evidence" value="ECO:0007669"/>
    <property type="project" value="TreeGrafter"/>
</dbReference>
<dbReference type="GO" id="GO:0005524">
    <property type="term" value="F:ATP binding"/>
    <property type="evidence" value="ECO:0007669"/>
    <property type="project" value="UniProtKB-UniRule"/>
</dbReference>
<dbReference type="GO" id="GO:0004810">
    <property type="term" value="F:CCA tRNA nucleotidyltransferase activity"/>
    <property type="evidence" value="ECO:0007669"/>
    <property type="project" value="InterPro"/>
</dbReference>
<dbReference type="GO" id="GO:0000049">
    <property type="term" value="F:tRNA binding"/>
    <property type="evidence" value="ECO:0007669"/>
    <property type="project" value="UniProtKB-UniRule"/>
</dbReference>
<dbReference type="GO" id="GO:0140741">
    <property type="term" value="F:tRNA-uracil-4 sulfurtransferase activity"/>
    <property type="evidence" value="ECO:0007669"/>
    <property type="project" value="UniProtKB-EC"/>
</dbReference>
<dbReference type="GO" id="GO:0009228">
    <property type="term" value="P:thiamine biosynthetic process"/>
    <property type="evidence" value="ECO:0007669"/>
    <property type="project" value="UniProtKB-KW"/>
</dbReference>
<dbReference type="GO" id="GO:0009229">
    <property type="term" value="P:thiamine diphosphate biosynthetic process"/>
    <property type="evidence" value="ECO:0007669"/>
    <property type="project" value="UniProtKB-UniRule"/>
</dbReference>
<dbReference type="GO" id="GO:0052837">
    <property type="term" value="P:thiazole biosynthetic process"/>
    <property type="evidence" value="ECO:0007669"/>
    <property type="project" value="InterPro"/>
</dbReference>
<dbReference type="GO" id="GO:0002937">
    <property type="term" value="P:tRNA 4-thiouridine biosynthesis"/>
    <property type="evidence" value="ECO:0007669"/>
    <property type="project" value="TreeGrafter"/>
</dbReference>
<dbReference type="CDD" id="cd01712">
    <property type="entry name" value="PPase_ThiI"/>
    <property type="match status" value="1"/>
</dbReference>
<dbReference type="CDD" id="cd00158">
    <property type="entry name" value="RHOD"/>
    <property type="match status" value="1"/>
</dbReference>
<dbReference type="CDD" id="cd11716">
    <property type="entry name" value="THUMP_ThiI"/>
    <property type="match status" value="1"/>
</dbReference>
<dbReference type="FunFam" id="3.30.2130.30:FF:000002">
    <property type="entry name" value="tRNA sulfurtransferase"/>
    <property type="match status" value="1"/>
</dbReference>
<dbReference type="FunFam" id="3.40.250.10:FF:000003">
    <property type="entry name" value="tRNA sulfurtransferase"/>
    <property type="match status" value="1"/>
</dbReference>
<dbReference type="FunFam" id="3.40.50.620:FF:000029">
    <property type="entry name" value="tRNA sulfurtransferase"/>
    <property type="match status" value="1"/>
</dbReference>
<dbReference type="Gene3D" id="3.30.2130.30">
    <property type="match status" value="1"/>
</dbReference>
<dbReference type="Gene3D" id="3.40.50.620">
    <property type="entry name" value="HUPs"/>
    <property type="match status" value="1"/>
</dbReference>
<dbReference type="Gene3D" id="3.40.250.10">
    <property type="entry name" value="Rhodanese-like domain"/>
    <property type="match status" value="1"/>
</dbReference>
<dbReference type="HAMAP" id="MF_00021">
    <property type="entry name" value="ThiI"/>
    <property type="match status" value="1"/>
</dbReference>
<dbReference type="InterPro" id="IPR001763">
    <property type="entry name" value="Rhodanese-like_dom"/>
</dbReference>
<dbReference type="InterPro" id="IPR036873">
    <property type="entry name" value="Rhodanese-like_dom_sf"/>
</dbReference>
<dbReference type="InterPro" id="IPR014729">
    <property type="entry name" value="Rossmann-like_a/b/a_fold"/>
</dbReference>
<dbReference type="InterPro" id="IPR020536">
    <property type="entry name" value="ThiI_AANH"/>
</dbReference>
<dbReference type="InterPro" id="IPR054173">
    <property type="entry name" value="ThiI_fer"/>
</dbReference>
<dbReference type="InterPro" id="IPR049961">
    <property type="entry name" value="ThiI_N"/>
</dbReference>
<dbReference type="InterPro" id="IPR026340">
    <property type="entry name" value="THII_Thiazole_biosynth_dom"/>
</dbReference>
<dbReference type="InterPro" id="IPR004114">
    <property type="entry name" value="THUMP_dom"/>
</dbReference>
<dbReference type="InterPro" id="IPR049962">
    <property type="entry name" value="THUMP_ThiI"/>
</dbReference>
<dbReference type="InterPro" id="IPR003720">
    <property type="entry name" value="tRNA_STrfase"/>
</dbReference>
<dbReference type="InterPro" id="IPR050102">
    <property type="entry name" value="tRNA_sulfurtransferase_ThiI"/>
</dbReference>
<dbReference type="NCBIfam" id="TIGR04271">
    <property type="entry name" value="ThiI_C_thiazole"/>
    <property type="match status" value="1"/>
</dbReference>
<dbReference type="NCBIfam" id="TIGR00342">
    <property type="entry name" value="tRNA uracil 4-sulfurtransferase ThiI"/>
    <property type="match status" value="1"/>
</dbReference>
<dbReference type="PANTHER" id="PTHR43209">
    <property type="entry name" value="TRNA SULFURTRANSFERASE"/>
    <property type="match status" value="1"/>
</dbReference>
<dbReference type="PANTHER" id="PTHR43209:SF1">
    <property type="entry name" value="TRNA SULFURTRANSFERASE"/>
    <property type="match status" value="1"/>
</dbReference>
<dbReference type="Pfam" id="PF02568">
    <property type="entry name" value="ThiI"/>
    <property type="match status" value="1"/>
</dbReference>
<dbReference type="Pfam" id="PF22025">
    <property type="entry name" value="ThiI_fer"/>
    <property type="match status" value="1"/>
</dbReference>
<dbReference type="Pfam" id="PF02926">
    <property type="entry name" value="THUMP"/>
    <property type="match status" value="1"/>
</dbReference>
<dbReference type="SMART" id="SM00981">
    <property type="entry name" value="THUMP"/>
    <property type="match status" value="1"/>
</dbReference>
<dbReference type="SUPFAM" id="SSF52402">
    <property type="entry name" value="Adenine nucleotide alpha hydrolases-like"/>
    <property type="match status" value="1"/>
</dbReference>
<dbReference type="SUPFAM" id="SSF52821">
    <property type="entry name" value="Rhodanese/Cell cycle control phosphatase"/>
    <property type="match status" value="1"/>
</dbReference>
<dbReference type="SUPFAM" id="SSF143437">
    <property type="entry name" value="THUMP domain-like"/>
    <property type="match status" value="1"/>
</dbReference>
<dbReference type="PROSITE" id="PS50206">
    <property type="entry name" value="RHODANESE_3"/>
    <property type="match status" value="1"/>
</dbReference>
<dbReference type="PROSITE" id="PS51165">
    <property type="entry name" value="THUMP"/>
    <property type="match status" value="1"/>
</dbReference>
<comment type="function">
    <text evidence="1">Catalyzes the ATP-dependent transfer of a sulfur to tRNA to produce 4-thiouridine in position 8 of tRNAs, which functions as a near-UV photosensor. Also catalyzes the transfer of sulfur to the sulfur carrier protein ThiS, forming ThiS-thiocarboxylate. This is a step in the synthesis of thiazole, in the thiamine biosynthesis pathway. The sulfur is donated as persulfide by IscS.</text>
</comment>
<comment type="catalytic activity">
    <reaction evidence="1">
        <text>[ThiI sulfur-carrier protein]-S-sulfanyl-L-cysteine + a uridine in tRNA + 2 reduced [2Fe-2S]-[ferredoxin] + ATP + H(+) = [ThiI sulfur-carrier protein]-L-cysteine + a 4-thiouridine in tRNA + 2 oxidized [2Fe-2S]-[ferredoxin] + AMP + diphosphate</text>
        <dbReference type="Rhea" id="RHEA:24176"/>
        <dbReference type="Rhea" id="RHEA-COMP:10000"/>
        <dbReference type="Rhea" id="RHEA-COMP:10001"/>
        <dbReference type="Rhea" id="RHEA-COMP:13337"/>
        <dbReference type="Rhea" id="RHEA-COMP:13338"/>
        <dbReference type="Rhea" id="RHEA-COMP:13339"/>
        <dbReference type="Rhea" id="RHEA-COMP:13340"/>
        <dbReference type="ChEBI" id="CHEBI:15378"/>
        <dbReference type="ChEBI" id="CHEBI:29950"/>
        <dbReference type="ChEBI" id="CHEBI:30616"/>
        <dbReference type="ChEBI" id="CHEBI:33019"/>
        <dbReference type="ChEBI" id="CHEBI:33737"/>
        <dbReference type="ChEBI" id="CHEBI:33738"/>
        <dbReference type="ChEBI" id="CHEBI:61963"/>
        <dbReference type="ChEBI" id="CHEBI:65315"/>
        <dbReference type="ChEBI" id="CHEBI:136798"/>
        <dbReference type="ChEBI" id="CHEBI:456215"/>
        <dbReference type="EC" id="2.8.1.4"/>
    </reaction>
</comment>
<comment type="catalytic activity">
    <reaction evidence="1">
        <text>[ThiS sulfur-carrier protein]-C-terminal Gly-Gly-AMP + S-sulfanyl-L-cysteinyl-[cysteine desulfurase] + AH2 = [ThiS sulfur-carrier protein]-C-terminal-Gly-aminoethanethioate + L-cysteinyl-[cysteine desulfurase] + A + AMP + 2 H(+)</text>
        <dbReference type="Rhea" id="RHEA:43340"/>
        <dbReference type="Rhea" id="RHEA-COMP:12157"/>
        <dbReference type="Rhea" id="RHEA-COMP:12158"/>
        <dbReference type="Rhea" id="RHEA-COMP:12910"/>
        <dbReference type="Rhea" id="RHEA-COMP:19908"/>
        <dbReference type="ChEBI" id="CHEBI:13193"/>
        <dbReference type="ChEBI" id="CHEBI:15378"/>
        <dbReference type="ChEBI" id="CHEBI:17499"/>
        <dbReference type="ChEBI" id="CHEBI:29950"/>
        <dbReference type="ChEBI" id="CHEBI:61963"/>
        <dbReference type="ChEBI" id="CHEBI:90618"/>
        <dbReference type="ChEBI" id="CHEBI:232372"/>
        <dbReference type="ChEBI" id="CHEBI:456215"/>
    </reaction>
</comment>
<comment type="pathway">
    <text evidence="1">Cofactor biosynthesis; thiamine diphosphate biosynthesis.</text>
</comment>
<comment type="subcellular location">
    <subcellularLocation>
        <location evidence="1">Cytoplasm</location>
    </subcellularLocation>
</comment>
<comment type="similarity">
    <text evidence="1">Belongs to the ThiI family.</text>
</comment>
<sequence length="482" mass="54787">MKFIIKLFPEITIKSQSVRLRFIKILTGNIRNVLKHYDETLAVVRHWDHIEVRAKDENQREAIRDALTRIPGIHHILEVEDHAYTDMHNIFEQALALYRERLEGKTFCVRVKRRGKHEFSSQDVERYVGGGLNQHIETARVNLTAPQITVHLEIEQDRLLLIKSRNEGIGGYPIGTQEDVLSLISGGFDSGVSSYMLMRRGCRVHYCFFNLGGAAHEIGVKQVAHYLWNRFGSSHRVRFVAIDFDPVVGEILEKVDDGQMGVVLKRMMVRAASKIAERYGVQALVTGEALGQVSSQTLTNLRLIDNASDTLILRPLISHDKEHIIKQARELGTEDFAKTMPEYCGVISKSPTVKAVKAKIEAEEGHFDFSILDRVVSEARNIDIREIAEQTSQEVVEVETVASFVPTDVLLDIRAPDEQDDKPLALDQVEIKSLPFYKLGTQFGDLDQSKTYLLYCERGVMSRLQALYLREQGFSNVKVYRP</sequence>
<evidence type="ECO:0000255" key="1">
    <source>
        <dbReference type="HAMAP-Rule" id="MF_00021"/>
    </source>
</evidence>
<keyword id="KW-0067">ATP-binding</keyword>
<keyword id="KW-0963">Cytoplasm</keyword>
<keyword id="KW-1015">Disulfide bond</keyword>
<keyword id="KW-0547">Nucleotide-binding</keyword>
<keyword id="KW-0676">Redox-active center</keyword>
<keyword id="KW-1185">Reference proteome</keyword>
<keyword id="KW-0694">RNA-binding</keyword>
<keyword id="KW-0784">Thiamine biosynthesis</keyword>
<keyword id="KW-0808">Transferase</keyword>
<keyword id="KW-0820">tRNA-binding</keyword>
<proteinExistence type="inferred from homology"/>
<protein>
    <recommendedName>
        <fullName evidence="1">tRNA sulfurtransferase</fullName>
        <ecNumber evidence="1">2.8.1.4</ecNumber>
    </recommendedName>
    <alternativeName>
        <fullName evidence="1">Sulfur carrier protein ThiS sulfurtransferase</fullName>
    </alternativeName>
    <alternativeName>
        <fullName evidence="1">Thiamine biosynthesis protein ThiI</fullName>
    </alternativeName>
    <alternativeName>
        <fullName evidence="1">tRNA 4-thiouridine synthase</fullName>
    </alternativeName>
</protein>
<reference key="1">
    <citation type="journal article" date="2004" name="Proc. Natl. Acad. Sci. U.S.A.">
        <title>Genome sequence of the enterobacterial phytopathogen Erwinia carotovora subsp. atroseptica and characterization of virulence factors.</title>
        <authorList>
            <person name="Bell K.S."/>
            <person name="Sebaihia M."/>
            <person name="Pritchard L."/>
            <person name="Holden M.T.G."/>
            <person name="Hyman L.J."/>
            <person name="Holeva M.C."/>
            <person name="Thomson N.R."/>
            <person name="Bentley S.D."/>
            <person name="Churcher L.J.C."/>
            <person name="Mungall K."/>
            <person name="Atkin R."/>
            <person name="Bason N."/>
            <person name="Brooks K."/>
            <person name="Chillingworth T."/>
            <person name="Clark K."/>
            <person name="Doggett J."/>
            <person name="Fraser A."/>
            <person name="Hance Z."/>
            <person name="Hauser H."/>
            <person name="Jagels K."/>
            <person name="Moule S."/>
            <person name="Norbertczak H."/>
            <person name="Ormond D."/>
            <person name="Price C."/>
            <person name="Quail M.A."/>
            <person name="Sanders M."/>
            <person name="Walker D."/>
            <person name="Whitehead S."/>
            <person name="Salmond G.P.C."/>
            <person name="Birch P.R.J."/>
            <person name="Parkhill J."/>
            <person name="Toth I.K."/>
        </authorList>
    </citation>
    <scope>NUCLEOTIDE SEQUENCE [LARGE SCALE GENOMIC DNA]</scope>
    <source>
        <strain>SCRI 1043 / ATCC BAA-672</strain>
    </source>
</reference>
<gene>
    <name evidence="1" type="primary">thiI</name>
    <name type="ordered locus">ECA1134</name>
</gene>
<organism>
    <name type="scientific">Pectobacterium atrosepticum (strain SCRI 1043 / ATCC BAA-672)</name>
    <name type="common">Erwinia carotovora subsp. atroseptica</name>
    <dbReference type="NCBI Taxonomy" id="218491"/>
    <lineage>
        <taxon>Bacteria</taxon>
        <taxon>Pseudomonadati</taxon>
        <taxon>Pseudomonadota</taxon>
        <taxon>Gammaproteobacteria</taxon>
        <taxon>Enterobacterales</taxon>
        <taxon>Pectobacteriaceae</taxon>
        <taxon>Pectobacterium</taxon>
    </lineage>
</organism>